<organism>
    <name type="scientific">Ciona intestinalis</name>
    <name type="common">Transparent sea squirt</name>
    <name type="synonym">Ascidia intestinalis</name>
    <dbReference type="NCBI Taxonomy" id="7719"/>
    <lineage>
        <taxon>Eukaryota</taxon>
        <taxon>Metazoa</taxon>
        <taxon>Chordata</taxon>
        <taxon>Tunicata</taxon>
        <taxon>Ascidiacea</taxon>
        <taxon>Phlebobranchia</taxon>
        <taxon>Cionidae</taxon>
        <taxon>Ciona</taxon>
    </lineage>
</organism>
<name>RS23_CIOIN</name>
<comment type="subunit">
    <text evidence="3">Component of the 40S small ribosomal subunit.</text>
</comment>
<comment type="subcellular location">
    <subcellularLocation>
        <location evidence="2">Cytoplasm</location>
        <location evidence="2">Cytosol</location>
    </subcellularLocation>
    <subcellularLocation>
        <location evidence="2">Cytoplasm</location>
    </subcellularLocation>
    <subcellularLocation>
        <location evidence="3">Rough endoplasmic reticulum</location>
    </subcellularLocation>
    <text evidence="2 3">Detected on cytosolic polysomes (By similarity). Detected in ribosomes that are associated with the rough endoplasmic reticulum (By similarity).</text>
</comment>
<comment type="similarity">
    <text evidence="4">Belongs to the universal ribosomal protein uS12 family.</text>
</comment>
<feature type="chain" id="PRO_0000146463" description="Small ribosomal subunit protein uS12">
    <location>
        <begin position="1"/>
        <end position="143"/>
    </location>
</feature>
<feature type="modified residue" description="Hydroxyproline" evidence="1">
    <location>
        <position position="62"/>
    </location>
</feature>
<gene>
    <name type="primary">RPS23</name>
</gene>
<dbReference type="EMBL" id="AJ297731">
    <property type="protein sequence ID" value="CAC82553.1"/>
    <property type="molecule type" value="mRNA"/>
</dbReference>
<dbReference type="RefSeq" id="NP_001027679.1">
    <property type="nucleotide sequence ID" value="NM_001032507.1"/>
</dbReference>
<dbReference type="FunCoup" id="Q8I7D5">
    <property type="interactions" value="546"/>
</dbReference>
<dbReference type="STRING" id="7719.ENSCINP00000012773"/>
<dbReference type="GeneID" id="445689"/>
<dbReference type="KEGG" id="cin:445689"/>
<dbReference type="CTD" id="445689"/>
<dbReference type="eggNOG" id="KOG1749">
    <property type="taxonomic scope" value="Eukaryota"/>
</dbReference>
<dbReference type="InParanoid" id="Q8I7D5"/>
<dbReference type="OrthoDB" id="1713912at2759"/>
<dbReference type="Proteomes" id="UP000008144">
    <property type="component" value="Unplaced"/>
</dbReference>
<dbReference type="GO" id="GO:0022627">
    <property type="term" value="C:cytosolic small ribosomal subunit"/>
    <property type="evidence" value="ECO:0000250"/>
    <property type="project" value="UniProtKB"/>
</dbReference>
<dbReference type="GO" id="GO:0005840">
    <property type="term" value="C:ribosome"/>
    <property type="evidence" value="ECO:0000318"/>
    <property type="project" value="GO_Central"/>
</dbReference>
<dbReference type="GO" id="GO:0005791">
    <property type="term" value="C:rough endoplasmic reticulum"/>
    <property type="evidence" value="ECO:0007669"/>
    <property type="project" value="UniProtKB-SubCell"/>
</dbReference>
<dbReference type="GO" id="GO:0003735">
    <property type="term" value="F:structural constituent of ribosome"/>
    <property type="evidence" value="ECO:0000318"/>
    <property type="project" value="GO_Central"/>
</dbReference>
<dbReference type="GO" id="GO:0002181">
    <property type="term" value="P:cytoplasmic translation"/>
    <property type="evidence" value="ECO:0000250"/>
    <property type="project" value="UniProtKB"/>
</dbReference>
<dbReference type="GO" id="GO:0006412">
    <property type="term" value="P:translation"/>
    <property type="evidence" value="ECO:0000318"/>
    <property type="project" value="GO_Central"/>
</dbReference>
<dbReference type="CDD" id="cd03367">
    <property type="entry name" value="Ribosomal_S23"/>
    <property type="match status" value="1"/>
</dbReference>
<dbReference type="FunFam" id="2.40.50.140:FF:000007">
    <property type="entry name" value="40S ribosomal protein S23"/>
    <property type="match status" value="1"/>
</dbReference>
<dbReference type="Gene3D" id="2.40.50.140">
    <property type="entry name" value="Nucleic acid-binding proteins"/>
    <property type="match status" value="1"/>
</dbReference>
<dbReference type="InterPro" id="IPR012340">
    <property type="entry name" value="NA-bd_OB-fold"/>
</dbReference>
<dbReference type="InterPro" id="IPR006032">
    <property type="entry name" value="Ribosomal_uS12"/>
</dbReference>
<dbReference type="InterPro" id="IPR005680">
    <property type="entry name" value="Ribosomal_uS12_euk/arc"/>
</dbReference>
<dbReference type="NCBIfam" id="NF003254">
    <property type="entry name" value="PRK04211.1"/>
    <property type="match status" value="1"/>
</dbReference>
<dbReference type="NCBIfam" id="TIGR00982">
    <property type="entry name" value="uS12_E_A"/>
    <property type="match status" value="1"/>
</dbReference>
<dbReference type="PANTHER" id="PTHR11652">
    <property type="entry name" value="30S RIBOSOMAL PROTEIN S12 FAMILY MEMBER"/>
    <property type="match status" value="1"/>
</dbReference>
<dbReference type="Pfam" id="PF00164">
    <property type="entry name" value="Ribosom_S12_S23"/>
    <property type="match status" value="1"/>
</dbReference>
<dbReference type="PIRSF" id="PIRSF002133">
    <property type="entry name" value="Ribosomal_S12/S23"/>
    <property type="match status" value="1"/>
</dbReference>
<dbReference type="SUPFAM" id="SSF50249">
    <property type="entry name" value="Nucleic acid-binding proteins"/>
    <property type="match status" value="1"/>
</dbReference>
<dbReference type="PROSITE" id="PS00055">
    <property type="entry name" value="RIBOSOMAL_S12"/>
    <property type="match status" value="1"/>
</dbReference>
<proteinExistence type="evidence at transcript level"/>
<evidence type="ECO:0000250" key="1"/>
<evidence type="ECO:0000250" key="2">
    <source>
        <dbReference type="UniProtKB" id="P62266"/>
    </source>
</evidence>
<evidence type="ECO:0000250" key="3">
    <source>
        <dbReference type="UniProtKB" id="Q6SA96"/>
    </source>
</evidence>
<evidence type="ECO:0000305" key="4"/>
<protein>
    <recommendedName>
        <fullName evidence="4">Small ribosomal subunit protein uS12</fullName>
    </recommendedName>
    <alternativeName>
        <fullName>40S ribosomal protein S23</fullName>
    </alternativeName>
</protein>
<sequence length="143" mass="15702">MGKPSGLRCARKLXNRRRDQKWHDXXYKKSHLGTALKANPFGGASHAKGIVLEKIGVEAKQPNSAIRKCVRVQLIKNGKKITAFVPNDGCLNYIEENDEVLVAGFGRSGHAVGDIPGVRFKIVKVANVSLHALFTGKKERPRS</sequence>
<accession>Q8I7D5</accession>
<reference key="1">
    <citation type="submission" date="2000-10" db="EMBL/GenBank/DDBJ databases">
        <title>Some full length of Ciona intestinalis.</title>
        <authorList>
            <person name="Ievolella C."/>
            <person name="Valle G."/>
        </authorList>
    </citation>
    <scope>NUCLEOTIDE SEQUENCE [MRNA]</scope>
</reference>
<keyword id="KW-0963">Cytoplasm</keyword>
<keyword id="KW-0256">Endoplasmic reticulum</keyword>
<keyword id="KW-0379">Hydroxylation</keyword>
<keyword id="KW-1185">Reference proteome</keyword>
<keyword id="KW-0687">Ribonucleoprotein</keyword>
<keyword id="KW-0689">Ribosomal protein</keyword>